<feature type="chain" id="PRO_0000139152" description="Methionine--tRNA ligase">
    <location>
        <begin position="1"/>
        <end position="680"/>
    </location>
</feature>
<feature type="domain" description="tRNA-binding" evidence="1">
    <location>
        <begin position="579"/>
        <end position="680"/>
    </location>
</feature>
<feature type="short sequence motif" description="'HIGH' region">
    <location>
        <begin position="15"/>
        <end position="25"/>
    </location>
</feature>
<feature type="short sequence motif" description="'KMSKS' region">
    <location>
        <begin position="332"/>
        <end position="336"/>
    </location>
</feature>
<feature type="binding site" evidence="1">
    <location>
        <position position="147"/>
    </location>
    <ligand>
        <name>Zn(2+)</name>
        <dbReference type="ChEBI" id="CHEBI:29105"/>
    </ligand>
</feature>
<feature type="binding site" evidence="1">
    <location>
        <position position="150"/>
    </location>
    <ligand>
        <name>Zn(2+)</name>
        <dbReference type="ChEBI" id="CHEBI:29105"/>
    </ligand>
</feature>
<feature type="binding site" evidence="1">
    <location>
        <position position="160"/>
    </location>
    <ligand>
        <name>Zn(2+)</name>
        <dbReference type="ChEBI" id="CHEBI:29105"/>
    </ligand>
</feature>
<feature type="binding site" evidence="1">
    <location>
        <position position="163"/>
    </location>
    <ligand>
        <name>Zn(2+)</name>
        <dbReference type="ChEBI" id="CHEBI:29105"/>
    </ligand>
</feature>
<feature type="binding site" evidence="1">
    <location>
        <position position="335"/>
    </location>
    <ligand>
        <name>ATP</name>
        <dbReference type="ChEBI" id="CHEBI:30616"/>
    </ligand>
</feature>
<keyword id="KW-0030">Aminoacyl-tRNA synthetase</keyword>
<keyword id="KW-0067">ATP-binding</keyword>
<keyword id="KW-0963">Cytoplasm</keyword>
<keyword id="KW-0436">Ligase</keyword>
<keyword id="KW-0479">Metal-binding</keyword>
<keyword id="KW-0547">Nucleotide-binding</keyword>
<keyword id="KW-0648">Protein biosynthesis</keyword>
<keyword id="KW-1185">Reference proteome</keyword>
<keyword id="KW-0694">RNA-binding</keyword>
<keyword id="KW-0820">tRNA-binding</keyword>
<keyword id="KW-0862">Zinc</keyword>
<reference key="1">
    <citation type="journal article" date="2003" name="J. Bacteriol.">
        <title>Complete genome sequence of the oral pathogenic bacterium Porphyromonas gingivalis strain W83.</title>
        <authorList>
            <person name="Nelson K.E."/>
            <person name="Fleischmann R.D."/>
            <person name="DeBoy R.T."/>
            <person name="Paulsen I.T."/>
            <person name="Fouts D.E."/>
            <person name="Eisen J.A."/>
            <person name="Daugherty S.C."/>
            <person name="Dodson R.J."/>
            <person name="Durkin A.S."/>
            <person name="Gwinn M.L."/>
            <person name="Haft D.H."/>
            <person name="Kolonay J.F."/>
            <person name="Nelson W.C."/>
            <person name="Mason T.M."/>
            <person name="Tallon L."/>
            <person name="Gray J."/>
            <person name="Granger D."/>
            <person name="Tettelin H."/>
            <person name="Dong H."/>
            <person name="Galvin J.L."/>
            <person name="Duncan M.J."/>
            <person name="Dewhirst F.E."/>
            <person name="Fraser C.M."/>
        </authorList>
    </citation>
    <scope>NUCLEOTIDE SEQUENCE [LARGE SCALE GENOMIC DNA]</scope>
    <source>
        <strain>ATCC BAA-308 / W83</strain>
    </source>
</reference>
<evidence type="ECO:0000255" key="1">
    <source>
        <dbReference type="HAMAP-Rule" id="MF_00098"/>
    </source>
</evidence>
<name>SYM_PORGI</name>
<proteinExistence type="inferred from homology"/>
<comment type="function">
    <text evidence="1">Is required not only for elongation of protein synthesis but also for the initiation of all mRNA translation through initiator tRNA(fMet) aminoacylation.</text>
</comment>
<comment type="catalytic activity">
    <reaction evidence="1">
        <text>tRNA(Met) + L-methionine + ATP = L-methionyl-tRNA(Met) + AMP + diphosphate</text>
        <dbReference type="Rhea" id="RHEA:13481"/>
        <dbReference type="Rhea" id="RHEA-COMP:9667"/>
        <dbReference type="Rhea" id="RHEA-COMP:9698"/>
        <dbReference type="ChEBI" id="CHEBI:30616"/>
        <dbReference type="ChEBI" id="CHEBI:33019"/>
        <dbReference type="ChEBI" id="CHEBI:57844"/>
        <dbReference type="ChEBI" id="CHEBI:78442"/>
        <dbReference type="ChEBI" id="CHEBI:78530"/>
        <dbReference type="ChEBI" id="CHEBI:456215"/>
        <dbReference type="EC" id="6.1.1.10"/>
    </reaction>
</comment>
<comment type="cofactor">
    <cofactor evidence="1">
        <name>Zn(2+)</name>
        <dbReference type="ChEBI" id="CHEBI:29105"/>
    </cofactor>
    <text evidence="1">Binds 1 zinc ion per subunit.</text>
</comment>
<comment type="subunit">
    <text evidence="1">Homodimer.</text>
</comment>
<comment type="subcellular location">
    <subcellularLocation>
        <location evidence="1">Cytoplasm</location>
    </subcellularLocation>
</comment>
<comment type="similarity">
    <text evidence="1">Belongs to the class-I aminoacyl-tRNA synthetase family. MetG type 1 subfamily.</text>
</comment>
<organism>
    <name type="scientific">Porphyromonas gingivalis (strain ATCC BAA-308 / W83)</name>
    <dbReference type="NCBI Taxonomy" id="242619"/>
    <lineage>
        <taxon>Bacteria</taxon>
        <taxon>Pseudomonadati</taxon>
        <taxon>Bacteroidota</taxon>
        <taxon>Bacteroidia</taxon>
        <taxon>Bacteroidales</taxon>
        <taxon>Porphyromonadaceae</taxon>
        <taxon>Porphyromonas</taxon>
    </lineage>
</organism>
<dbReference type="EC" id="6.1.1.10" evidence="1"/>
<dbReference type="EMBL" id="AE015924">
    <property type="protein sequence ID" value="AAQ65408.1"/>
    <property type="molecule type" value="Genomic_DNA"/>
</dbReference>
<dbReference type="RefSeq" id="WP_005875362.1">
    <property type="nucleotide sequence ID" value="NC_002950.2"/>
</dbReference>
<dbReference type="SMR" id="Q7MXK7"/>
<dbReference type="STRING" id="242619.PG_0170"/>
<dbReference type="EnsemblBacteria" id="AAQ65408">
    <property type="protein sequence ID" value="AAQ65408"/>
    <property type="gene ID" value="PG_0170"/>
</dbReference>
<dbReference type="KEGG" id="pgi:PG_0170"/>
<dbReference type="PATRIC" id="fig|242619.8.peg.157"/>
<dbReference type="eggNOG" id="COG0073">
    <property type="taxonomic scope" value="Bacteria"/>
</dbReference>
<dbReference type="eggNOG" id="COG0143">
    <property type="taxonomic scope" value="Bacteria"/>
</dbReference>
<dbReference type="HOGENOM" id="CLU_009710_1_2_10"/>
<dbReference type="BioCyc" id="PGIN242619:G1G02-159-MONOMER"/>
<dbReference type="Proteomes" id="UP000000588">
    <property type="component" value="Chromosome"/>
</dbReference>
<dbReference type="GO" id="GO:0005829">
    <property type="term" value="C:cytosol"/>
    <property type="evidence" value="ECO:0007669"/>
    <property type="project" value="TreeGrafter"/>
</dbReference>
<dbReference type="GO" id="GO:0005524">
    <property type="term" value="F:ATP binding"/>
    <property type="evidence" value="ECO:0007669"/>
    <property type="project" value="UniProtKB-UniRule"/>
</dbReference>
<dbReference type="GO" id="GO:0046872">
    <property type="term" value="F:metal ion binding"/>
    <property type="evidence" value="ECO:0007669"/>
    <property type="project" value="UniProtKB-KW"/>
</dbReference>
<dbReference type="GO" id="GO:0004825">
    <property type="term" value="F:methionine-tRNA ligase activity"/>
    <property type="evidence" value="ECO:0007669"/>
    <property type="project" value="UniProtKB-UniRule"/>
</dbReference>
<dbReference type="GO" id="GO:0000049">
    <property type="term" value="F:tRNA binding"/>
    <property type="evidence" value="ECO:0007669"/>
    <property type="project" value="UniProtKB-KW"/>
</dbReference>
<dbReference type="GO" id="GO:0006431">
    <property type="term" value="P:methionyl-tRNA aminoacylation"/>
    <property type="evidence" value="ECO:0007669"/>
    <property type="project" value="UniProtKB-UniRule"/>
</dbReference>
<dbReference type="CDD" id="cd07957">
    <property type="entry name" value="Anticodon_Ia_Met"/>
    <property type="match status" value="1"/>
</dbReference>
<dbReference type="CDD" id="cd00814">
    <property type="entry name" value="MetRS_core"/>
    <property type="match status" value="1"/>
</dbReference>
<dbReference type="CDD" id="cd02800">
    <property type="entry name" value="tRNA_bind_EcMetRS_like"/>
    <property type="match status" value="1"/>
</dbReference>
<dbReference type="FunFam" id="2.20.28.20:FF:000001">
    <property type="entry name" value="Methionine--tRNA ligase"/>
    <property type="match status" value="1"/>
</dbReference>
<dbReference type="FunFam" id="2.40.50.140:FF:000042">
    <property type="entry name" value="Methionine--tRNA ligase"/>
    <property type="match status" value="1"/>
</dbReference>
<dbReference type="Gene3D" id="3.40.50.620">
    <property type="entry name" value="HUPs"/>
    <property type="match status" value="1"/>
</dbReference>
<dbReference type="Gene3D" id="1.10.730.10">
    <property type="entry name" value="Isoleucyl-tRNA Synthetase, Domain 1"/>
    <property type="match status" value="1"/>
</dbReference>
<dbReference type="Gene3D" id="2.20.28.20">
    <property type="entry name" value="Methionyl-tRNA synthetase, Zn-domain"/>
    <property type="match status" value="1"/>
</dbReference>
<dbReference type="Gene3D" id="2.40.50.140">
    <property type="entry name" value="Nucleic acid-binding proteins"/>
    <property type="match status" value="1"/>
</dbReference>
<dbReference type="HAMAP" id="MF_00098">
    <property type="entry name" value="Met_tRNA_synth_type1"/>
    <property type="match status" value="1"/>
</dbReference>
<dbReference type="InterPro" id="IPR001412">
    <property type="entry name" value="aa-tRNA-synth_I_CS"/>
</dbReference>
<dbReference type="InterPro" id="IPR041872">
    <property type="entry name" value="Anticodon_Met"/>
</dbReference>
<dbReference type="InterPro" id="IPR004495">
    <property type="entry name" value="Met-tRNA-synth_bsu_C"/>
</dbReference>
<dbReference type="InterPro" id="IPR023458">
    <property type="entry name" value="Met-tRNA_ligase_1"/>
</dbReference>
<dbReference type="InterPro" id="IPR014758">
    <property type="entry name" value="Met-tRNA_synth"/>
</dbReference>
<dbReference type="InterPro" id="IPR015413">
    <property type="entry name" value="Methionyl/Leucyl_tRNA_Synth"/>
</dbReference>
<dbReference type="InterPro" id="IPR033911">
    <property type="entry name" value="MetRS_core"/>
</dbReference>
<dbReference type="InterPro" id="IPR029038">
    <property type="entry name" value="MetRS_Zn"/>
</dbReference>
<dbReference type="InterPro" id="IPR012340">
    <property type="entry name" value="NA-bd_OB-fold"/>
</dbReference>
<dbReference type="InterPro" id="IPR014729">
    <property type="entry name" value="Rossmann-like_a/b/a_fold"/>
</dbReference>
<dbReference type="InterPro" id="IPR002547">
    <property type="entry name" value="tRNA-bd_dom"/>
</dbReference>
<dbReference type="InterPro" id="IPR009080">
    <property type="entry name" value="tRNAsynth_Ia_anticodon-bd"/>
</dbReference>
<dbReference type="NCBIfam" id="TIGR00398">
    <property type="entry name" value="metG"/>
    <property type="match status" value="1"/>
</dbReference>
<dbReference type="NCBIfam" id="TIGR00399">
    <property type="entry name" value="metG_C_term"/>
    <property type="match status" value="1"/>
</dbReference>
<dbReference type="NCBIfam" id="NF001100">
    <property type="entry name" value="PRK00133.1"/>
    <property type="match status" value="1"/>
</dbReference>
<dbReference type="PANTHER" id="PTHR45765">
    <property type="entry name" value="METHIONINE--TRNA LIGASE"/>
    <property type="match status" value="1"/>
</dbReference>
<dbReference type="PANTHER" id="PTHR45765:SF1">
    <property type="entry name" value="METHIONINE--TRNA LIGASE, CYTOPLASMIC"/>
    <property type="match status" value="1"/>
</dbReference>
<dbReference type="Pfam" id="PF19303">
    <property type="entry name" value="Anticodon_3"/>
    <property type="match status" value="1"/>
</dbReference>
<dbReference type="Pfam" id="PF09334">
    <property type="entry name" value="tRNA-synt_1g"/>
    <property type="match status" value="1"/>
</dbReference>
<dbReference type="Pfam" id="PF01588">
    <property type="entry name" value="tRNA_bind"/>
    <property type="match status" value="1"/>
</dbReference>
<dbReference type="PRINTS" id="PR01041">
    <property type="entry name" value="TRNASYNTHMET"/>
</dbReference>
<dbReference type="SUPFAM" id="SSF47323">
    <property type="entry name" value="Anticodon-binding domain of a subclass of class I aminoacyl-tRNA synthetases"/>
    <property type="match status" value="1"/>
</dbReference>
<dbReference type="SUPFAM" id="SSF57770">
    <property type="entry name" value="Methionyl-tRNA synthetase (MetRS), Zn-domain"/>
    <property type="match status" value="1"/>
</dbReference>
<dbReference type="SUPFAM" id="SSF50249">
    <property type="entry name" value="Nucleic acid-binding proteins"/>
    <property type="match status" value="1"/>
</dbReference>
<dbReference type="SUPFAM" id="SSF52374">
    <property type="entry name" value="Nucleotidylyl transferase"/>
    <property type="match status" value="1"/>
</dbReference>
<dbReference type="PROSITE" id="PS00178">
    <property type="entry name" value="AA_TRNA_LIGASE_I"/>
    <property type="match status" value="1"/>
</dbReference>
<dbReference type="PROSITE" id="PS50886">
    <property type="entry name" value="TRBD"/>
    <property type="match status" value="1"/>
</dbReference>
<sequence>MDRQFKRTLITTALPYANGPVHIGHLAGVYVPADIYARYLRLRGRDCLLIGGSDEHGVPIALKAKAEGCTPQEVVDRYHELIKRSFEGLGISFDIYSRTTSDIHRRTASEFFKTLYEKGEFVEQTSEQYYDEEAKQFLADRYIIGTCPHCSNDRAYGDQCEACGTSLNATDLIDPRSTISGSAPVLRETKHWYLPLDKHEPFLKEWILDGHKEWKSNVYGQCKSWLDMGLQPRAVSRDLDWGIPVPVEGAEGKVLYVWFDAPIGYISNTKELCPDSWETWWKSEDTRLVHFIGKDNIVFHCIVFPAMLRAEGSFILPDNVPANEFLNLEGDKISTSRNWAVWLHEYLEEFPGKQDVLRYVLTANAPETKDNDFTWRDFQARNNNELVAIFGNFVNRALVLTHKYFDGAVPPKGELTDCDSRTIEEFAAVKQALEHQLDTFHFREALKEAMNLARIGNKYLADTEPWKLAKTDMNRVATILNLSLQITANLAIAFEPFLPFSSAKLMSMLSTDCPFGWDRLGSTDLLPEGHVLGNPELLFEKLEDSVIDAQIQKLQDTKLANEKAAHQAAPIAEDIAFEDFLKLDIRVGTVLECEKVPKADKLLRFRIDDGLSGRTIVSGIAKHYAPEELVGKQVCFIANLPPRKLKGIESEGMILSAEDADGSLRVIMPAAEVAAGSQVK</sequence>
<gene>
    <name evidence="1" type="primary">metG</name>
    <name type="ordered locus">PG_0170</name>
</gene>
<accession>Q7MXK7</accession>
<protein>
    <recommendedName>
        <fullName evidence="1">Methionine--tRNA ligase</fullName>
        <ecNumber evidence="1">6.1.1.10</ecNumber>
    </recommendedName>
    <alternativeName>
        <fullName evidence="1">Methionyl-tRNA synthetase</fullName>
        <shortName evidence="1">MetRS</shortName>
    </alternativeName>
</protein>